<name>GLMU_SHEB9</name>
<dbReference type="EC" id="2.7.7.23" evidence="1"/>
<dbReference type="EC" id="2.3.1.157" evidence="1"/>
<dbReference type="EMBL" id="CP000891">
    <property type="protein sequence ID" value="ABX51662.1"/>
    <property type="molecule type" value="Genomic_DNA"/>
</dbReference>
<dbReference type="RefSeq" id="WP_006084761.1">
    <property type="nucleotide sequence ID" value="NC_009997.1"/>
</dbReference>
<dbReference type="SMR" id="A9KX04"/>
<dbReference type="GeneID" id="11774460"/>
<dbReference type="KEGG" id="sbn:Sbal195_4505"/>
<dbReference type="HOGENOM" id="CLU_029499_15_2_6"/>
<dbReference type="UniPathway" id="UPA00113">
    <property type="reaction ID" value="UER00532"/>
</dbReference>
<dbReference type="UniPathway" id="UPA00113">
    <property type="reaction ID" value="UER00533"/>
</dbReference>
<dbReference type="UniPathway" id="UPA00973"/>
<dbReference type="Proteomes" id="UP000000770">
    <property type="component" value="Chromosome"/>
</dbReference>
<dbReference type="GO" id="GO:0005737">
    <property type="term" value="C:cytoplasm"/>
    <property type="evidence" value="ECO:0007669"/>
    <property type="project" value="UniProtKB-SubCell"/>
</dbReference>
<dbReference type="GO" id="GO:0016020">
    <property type="term" value="C:membrane"/>
    <property type="evidence" value="ECO:0007669"/>
    <property type="project" value="GOC"/>
</dbReference>
<dbReference type="GO" id="GO:0019134">
    <property type="term" value="F:glucosamine-1-phosphate N-acetyltransferase activity"/>
    <property type="evidence" value="ECO:0007669"/>
    <property type="project" value="UniProtKB-UniRule"/>
</dbReference>
<dbReference type="GO" id="GO:0000287">
    <property type="term" value="F:magnesium ion binding"/>
    <property type="evidence" value="ECO:0007669"/>
    <property type="project" value="UniProtKB-UniRule"/>
</dbReference>
<dbReference type="GO" id="GO:0003977">
    <property type="term" value="F:UDP-N-acetylglucosamine diphosphorylase activity"/>
    <property type="evidence" value="ECO:0007669"/>
    <property type="project" value="UniProtKB-UniRule"/>
</dbReference>
<dbReference type="GO" id="GO:0000902">
    <property type="term" value="P:cell morphogenesis"/>
    <property type="evidence" value="ECO:0007669"/>
    <property type="project" value="UniProtKB-UniRule"/>
</dbReference>
<dbReference type="GO" id="GO:0071555">
    <property type="term" value="P:cell wall organization"/>
    <property type="evidence" value="ECO:0007669"/>
    <property type="project" value="UniProtKB-KW"/>
</dbReference>
<dbReference type="GO" id="GO:0009245">
    <property type="term" value="P:lipid A biosynthetic process"/>
    <property type="evidence" value="ECO:0007669"/>
    <property type="project" value="UniProtKB-UniRule"/>
</dbReference>
<dbReference type="GO" id="GO:0009252">
    <property type="term" value="P:peptidoglycan biosynthetic process"/>
    <property type="evidence" value="ECO:0007669"/>
    <property type="project" value="UniProtKB-UniRule"/>
</dbReference>
<dbReference type="GO" id="GO:0008360">
    <property type="term" value="P:regulation of cell shape"/>
    <property type="evidence" value="ECO:0007669"/>
    <property type="project" value="UniProtKB-KW"/>
</dbReference>
<dbReference type="GO" id="GO:0006048">
    <property type="term" value="P:UDP-N-acetylglucosamine biosynthetic process"/>
    <property type="evidence" value="ECO:0007669"/>
    <property type="project" value="UniProtKB-UniPathway"/>
</dbReference>
<dbReference type="CDD" id="cd02540">
    <property type="entry name" value="GT2_GlmU_N_bac"/>
    <property type="match status" value="1"/>
</dbReference>
<dbReference type="CDD" id="cd03353">
    <property type="entry name" value="LbH_GlmU_C"/>
    <property type="match status" value="1"/>
</dbReference>
<dbReference type="Gene3D" id="2.160.10.10">
    <property type="entry name" value="Hexapeptide repeat proteins"/>
    <property type="match status" value="1"/>
</dbReference>
<dbReference type="Gene3D" id="3.90.550.10">
    <property type="entry name" value="Spore Coat Polysaccharide Biosynthesis Protein SpsA, Chain A"/>
    <property type="match status" value="1"/>
</dbReference>
<dbReference type="HAMAP" id="MF_01631">
    <property type="entry name" value="GlmU"/>
    <property type="match status" value="1"/>
</dbReference>
<dbReference type="InterPro" id="IPR005882">
    <property type="entry name" value="Bifunctional_GlmU"/>
</dbReference>
<dbReference type="InterPro" id="IPR050065">
    <property type="entry name" value="GlmU-like"/>
</dbReference>
<dbReference type="InterPro" id="IPR038009">
    <property type="entry name" value="GlmU_C_LbH"/>
</dbReference>
<dbReference type="InterPro" id="IPR001451">
    <property type="entry name" value="Hexapep"/>
</dbReference>
<dbReference type="InterPro" id="IPR018357">
    <property type="entry name" value="Hexapep_transf_CS"/>
</dbReference>
<dbReference type="InterPro" id="IPR025877">
    <property type="entry name" value="MobA-like_NTP_Trfase"/>
</dbReference>
<dbReference type="InterPro" id="IPR029044">
    <property type="entry name" value="Nucleotide-diphossugar_trans"/>
</dbReference>
<dbReference type="InterPro" id="IPR011004">
    <property type="entry name" value="Trimer_LpxA-like_sf"/>
</dbReference>
<dbReference type="NCBIfam" id="TIGR01173">
    <property type="entry name" value="glmU"/>
    <property type="match status" value="1"/>
</dbReference>
<dbReference type="NCBIfam" id="NF006986">
    <property type="entry name" value="PRK09451.1"/>
    <property type="match status" value="1"/>
</dbReference>
<dbReference type="PANTHER" id="PTHR43584:SF3">
    <property type="entry name" value="BIFUNCTIONAL PROTEIN GLMU"/>
    <property type="match status" value="1"/>
</dbReference>
<dbReference type="PANTHER" id="PTHR43584">
    <property type="entry name" value="NUCLEOTIDYL TRANSFERASE"/>
    <property type="match status" value="1"/>
</dbReference>
<dbReference type="Pfam" id="PF00132">
    <property type="entry name" value="Hexapep"/>
    <property type="match status" value="2"/>
</dbReference>
<dbReference type="Pfam" id="PF12804">
    <property type="entry name" value="NTP_transf_3"/>
    <property type="match status" value="1"/>
</dbReference>
<dbReference type="SUPFAM" id="SSF53448">
    <property type="entry name" value="Nucleotide-diphospho-sugar transferases"/>
    <property type="match status" value="1"/>
</dbReference>
<dbReference type="SUPFAM" id="SSF51161">
    <property type="entry name" value="Trimeric LpxA-like enzymes"/>
    <property type="match status" value="1"/>
</dbReference>
<dbReference type="PROSITE" id="PS00101">
    <property type="entry name" value="HEXAPEP_TRANSFERASES"/>
    <property type="match status" value="1"/>
</dbReference>
<reference key="1">
    <citation type="submission" date="2007-11" db="EMBL/GenBank/DDBJ databases">
        <title>Complete sequence of chromosome of Shewanella baltica OS195.</title>
        <authorList>
            <consortium name="US DOE Joint Genome Institute"/>
            <person name="Copeland A."/>
            <person name="Lucas S."/>
            <person name="Lapidus A."/>
            <person name="Barry K."/>
            <person name="Glavina del Rio T."/>
            <person name="Dalin E."/>
            <person name="Tice H."/>
            <person name="Pitluck S."/>
            <person name="Chain P."/>
            <person name="Malfatti S."/>
            <person name="Shin M."/>
            <person name="Vergez L."/>
            <person name="Schmutz J."/>
            <person name="Larimer F."/>
            <person name="Land M."/>
            <person name="Hauser L."/>
            <person name="Kyrpides N."/>
            <person name="Kim E."/>
            <person name="Brettar I."/>
            <person name="Rodrigues J."/>
            <person name="Konstantinidis K."/>
            <person name="Klappenbach J."/>
            <person name="Hofle M."/>
            <person name="Tiedje J."/>
            <person name="Richardson P."/>
        </authorList>
    </citation>
    <scope>NUCLEOTIDE SEQUENCE [LARGE SCALE GENOMIC DNA]</scope>
    <source>
        <strain>OS195</strain>
    </source>
</reference>
<protein>
    <recommendedName>
        <fullName evidence="1">Bifunctional protein GlmU</fullName>
    </recommendedName>
    <domain>
        <recommendedName>
            <fullName evidence="1">UDP-N-acetylglucosamine pyrophosphorylase</fullName>
            <ecNumber evidence="1">2.7.7.23</ecNumber>
        </recommendedName>
        <alternativeName>
            <fullName evidence="1">N-acetylglucosamine-1-phosphate uridyltransferase</fullName>
        </alternativeName>
    </domain>
    <domain>
        <recommendedName>
            <fullName evidence="1">Glucosamine-1-phosphate N-acetyltransferase</fullName>
            <ecNumber evidence="1">2.3.1.157</ecNumber>
        </recommendedName>
    </domain>
</protein>
<proteinExistence type="inferred from homology"/>
<organism>
    <name type="scientific">Shewanella baltica (strain OS195)</name>
    <dbReference type="NCBI Taxonomy" id="399599"/>
    <lineage>
        <taxon>Bacteria</taxon>
        <taxon>Pseudomonadati</taxon>
        <taxon>Pseudomonadota</taxon>
        <taxon>Gammaproteobacteria</taxon>
        <taxon>Alteromonadales</taxon>
        <taxon>Shewanellaceae</taxon>
        <taxon>Shewanella</taxon>
    </lineage>
</organism>
<accession>A9KX04</accession>
<gene>
    <name evidence="1" type="primary">glmU</name>
    <name type="ordered locus">Sbal195_4505</name>
</gene>
<evidence type="ECO:0000255" key="1">
    <source>
        <dbReference type="HAMAP-Rule" id="MF_01631"/>
    </source>
</evidence>
<feature type="chain" id="PRO_1000088139" description="Bifunctional protein GlmU">
    <location>
        <begin position="1"/>
        <end position="460"/>
    </location>
</feature>
<feature type="region of interest" description="Pyrophosphorylase" evidence="1">
    <location>
        <begin position="1"/>
        <end position="232"/>
    </location>
</feature>
<feature type="region of interest" description="Linker" evidence="1">
    <location>
        <begin position="233"/>
        <end position="253"/>
    </location>
</feature>
<feature type="region of interest" description="N-acetyltransferase" evidence="1">
    <location>
        <begin position="254"/>
        <end position="460"/>
    </location>
</feature>
<feature type="active site" description="Proton acceptor" evidence="1">
    <location>
        <position position="366"/>
    </location>
</feature>
<feature type="binding site" evidence="1">
    <location>
        <begin position="8"/>
        <end position="11"/>
    </location>
    <ligand>
        <name>UDP-N-acetyl-alpha-D-glucosamine</name>
        <dbReference type="ChEBI" id="CHEBI:57705"/>
    </ligand>
</feature>
<feature type="binding site" evidence="1">
    <location>
        <position position="22"/>
    </location>
    <ligand>
        <name>UDP-N-acetyl-alpha-D-glucosamine</name>
        <dbReference type="ChEBI" id="CHEBI:57705"/>
    </ligand>
</feature>
<feature type="binding site" evidence="1">
    <location>
        <position position="73"/>
    </location>
    <ligand>
        <name>UDP-N-acetyl-alpha-D-glucosamine</name>
        <dbReference type="ChEBI" id="CHEBI:57705"/>
    </ligand>
</feature>
<feature type="binding site" evidence="1">
    <location>
        <begin position="78"/>
        <end position="79"/>
    </location>
    <ligand>
        <name>UDP-N-acetyl-alpha-D-glucosamine</name>
        <dbReference type="ChEBI" id="CHEBI:57705"/>
    </ligand>
</feature>
<feature type="binding site" evidence="1">
    <location>
        <begin position="100"/>
        <end position="102"/>
    </location>
    <ligand>
        <name>UDP-N-acetyl-alpha-D-glucosamine</name>
        <dbReference type="ChEBI" id="CHEBI:57705"/>
    </ligand>
</feature>
<feature type="binding site" evidence="1">
    <location>
        <position position="102"/>
    </location>
    <ligand>
        <name>Mg(2+)</name>
        <dbReference type="ChEBI" id="CHEBI:18420"/>
    </ligand>
</feature>
<feature type="binding site" evidence="1">
    <location>
        <position position="137"/>
    </location>
    <ligand>
        <name>UDP-N-acetyl-alpha-D-glucosamine</name>
        <dbReference type="ChEBI" id="CHEBI:57705"/>
    </ligand>
</feature>
<feature type="binding site" evidence="1">
    <location>
        <position position="157"/>
    </location>
    <ligand>
        <name>UDP-N-acetyl-alpha-D-glucosamine</name>
        <dbReference type="ChEBI" id="CHEBI:57705"/>
    </ligand>
</feature>
<feature type="binding site" evidence="1">
    <location>
        <position position="172"/>
    </location>
    <ligand>
        <name>UDP-N-acetyl-alpha-D-glucosamine</name>
        <dbReference type="ChEBI" id="CHEBI:57705"/>
    </ligand>
</feature>
<feature type="binding site" evidence="1">
    <location>
        <position position="230"/>
    </location>
    <ligand>
        <name>Mg(2+)</name>
        <dbReference type="ChEBI" id="CHEBI:18420"/>
    </ligand>
</feature>
<feature type="binding site" evidence="1">
    <location>
        <position position="230"/>
    </location>
    <ligand>
        <name>UDP-N-acetyl-alpha-D-glucosamine</name>
        <dbReference type="ChEBI" id="CHEBI:57705"/>
    </ligand>
</feature>
<feature type="binding site" evidence="1">
    <location>
        <position position="336"/>
    </location>
    <ligand>
        <name>UDP-N-acetyl-alpha-D-glucosamine</name>
        <dbReference type="ChEBI" id="CHEBI:57705"/>
    </ligand>
</feature>
<feature type="binding site" evidence="1">
    <location>
        <position position="354"/>
    </location>
    <ligand>
        <name>UDP-N-acetyl-alpha-D-glucosamine</name>
        <dbReference type="ChEBI" id="CHEBI:57705"/>
    </ligand>
</feature>
<feature type="binding site" evidence="1">
    <location>
        <position position="369"/>
    </location>
    <ligand>
        <name>UDP-N-acetyl-alpha-D-glucosamine</name>
        <dbReference type="ChEBI" id="CHEBI:57705"/>
    </ligand>
</feature>
<feature type="binding site" evidence="1">
    <location>
        <position position="380"/>
    </location>
    <ligand>
        <name>UDP-N-acetyl-alpha-D-glucosamine</name>
        <dbReference type="ChEBI" id="CHEBI:57705"/>
    </ligand>
</feature>
<feature type="binding site" evidence="1">
    <location>
        <position position="383"/>
    </location>
    <ligand>
        <name>acetyl-CoA</name>
        <dbReference type="ChEBI" id="CHEBI:57288"/>
    </ligand>
</feature>
<feature type="binding site" evidence="1">
    <location>
        <begin position="389"/>
        <end position="390"/>
    </location>
    <ligand>
        <name>acetyl-CoA</name>
        <dbReference type="ChEBI" id="CHEBI:57288"/>
    </ligand>
</feature>
<feature type="binding site" evidence="1">
    <location>
        <position position="408"/>
    </location>
    <ligand>
        <name>acetyl-CoA</name>
        <dbReference type="ChEBI" id="CHEBI:57288"/>
    </ligand>
</feature>
<feature type="binding site" evidence="1">
    <location>
        <position position="426"/>
    </location>
    <ligand>
        <name>acetyl-CoA</name>
        <dbReference type="ChEBI" id="CHEBI:57288"/>
    </ligand>
</feature>
<feature type="binding site" evidence="1">
    <location>
        <position position="443"/>
    </location>
    <ligand>
        <name>acetyl-CoA</name>
        <dbReference type="ChEBI" id="CHEBI:57288"/>
    </ligand>
</feature>
<sequence length="460" mass="48711">MALNVVILAAGKGTRMRSDLPKVLHPIAHKSMVQHVIDTAHKVGSDAIQLVYGYGADKLKASLGEQQLNWVLQAEQLGTGHAVAQASPHIADNDTVLILYGDVPLIQQSTLEALLAARPENGVAILTVNLANPMGYGRIVRTPCEGQEQGKVIGIIEQKDATAEQLLINEINTGIMAVPGKQLKAWLSRLSNNNAQGEYYLTDIIAMAHADGVAIDTAQPQSAIEVEGANNRVQLAQLERAYQAREAEKLMLAGANLRDPSRIDIRGDVTVGMDVMIDINVIFEGKVTLGNNVTIGAGAILIDCEIADNAEIKPYSIIEGAKLGVAASAGPFARLRPGAELKQDAHIGNFVEVKKAVIGVGSKAGHLAYLGDAIIGDGVNIGAGTITCNYDGANKHLTVIEDNVFVGSDTQLVAPVTIGKGATLGAGSTITRDVGENELVITRVKQKHLTGWQRPVKIKK</sequence>
<comment type="function">
    <text evidence="1">Catalyzes the last two sequential reactions in the de novo biosynthetic pathway for UDP-N-acetylglucosamine (UDP-GlcNAc). The C-terminal domain catalyzes the transfer of acetyl group from acetyl coenzyme A to glucosamine-1-phosphate (GlcN-1-P) to produce N-acetylglucosamine-1-phosphate (GlcNAc-1-P), which is converted into UDP-GlcNAc by the transfer of uridine 5-monophosphate (from uridine 5-triphosphate), a reaction catalyzed by the N-terminal domain.</text>
</comment>
<comment type="catalytic activity">
    <reaction evidence="1">
        <text>alpha-D-glucosamine 1-phosphate + acetyl-CoA = N-acetyl-alpha-D-glucosamine 1-phosphate + CoA + H(+)</text>
        <dbReference type="Rhea" id="RHEA:13725"/>
        <dbReference type="ChEBI" id="CHEBI:15378"/>
        <dbReference type="ChEBI" id="CHEBI:57287"/>
        <dbReference type="ChEBI" id="CHEBI:57288"/>
        <dbReference type="ChEBI" id="CHEBI:57776"/>
        <dbReference type="ChEBI" id="CHEBI:58516"/>
        <dbReference type="EC" id="2.3.1.157"/>
    </reaction>
</comment>
<comment type="catalytic activity">
    <reaction evidence="1">
        <text>N-acetyl-alpha-D-glucosamine 1-phosphate + UTP + H(+) = UDP-N-acetyl-alpha-D-glucosamine + diphosphate</text>
        <dbReference type="Rhea" id="RHEA:13509"/>
        <dbReference type="ChEBI" id="CHEBI:15378"/>
        <dbReference type="ChEBI" id="CHEBI:33019"/>
        <dbReference type="ChEBI" id="CHEBI:46398"/>
        <dbReference type="ChEBI" id="CHEBI:57705"/>
        <dbReference type="ChEBI" id="CHEBI:57776"/>
        <dbReference type="EC" id="2.7.7.23"/>
    </reaction>
</comment>
<comment type="cofactor">
    <cofactor evidence="1">
        <name>Mg(2+)</name>
        <dbReference type="ChEBI" id="CHEBI:18420"/>
    </cofactor>
    <text evidence="1">Binds 1 Mg(2+) ion per subunit.</text>
</comment>
<comment type="pathway">
    <text evidence="1">Nucleotide-sugar biosynthesis; UDP-N-acetyl-alpha-D-glucosamine biosynthesis; N-acetyl-alpha-D-glucosamine 1-phosphate from alpha-D-glucosamine 6-phosphate (route II): step 2/2.</text>
</comment>
<comment type="pathway">
    <text evidence="1">Nucleotide-sugar biosynthesis; UDP-N-acetyl-alpha-D-glucosamine biosynthesis; UDP-N-acetyl-alpha-D-glucosamine from N-acetyl-alpha-D-glucosamine 1-phosphate: step 1/1.</text>
</comment>
<comment type="pathway">
    <text evidence="1">Bacterial outer membrane biogenesis; LPS lipid A biosynthesis.</text>
</comment>
<comment type="subunit">
    <text evidence="1">Homotrimer.</text>
</comment>
<comment type="subcellular location">
    <subcellularLocation>
        <location evidence="1">Cytoplasm</location>
    </subcellularLocation>
</comment>
<comment type="similarity">
    <text evidence="1">In the N-terminal section; belongs to the N-acetylglucosamine-1-phosphate uridyltransferase family.</text>
</comment>
<comment type="similarity">
    <text evidence="1">In the C-terminal section; belongs to the transferase hexapeptide repeat family.</text>
</comment>
<keyword id="KW-0012">Acyltransferase</keyword>
<keyword id="KW-0133">Cell shape</keyword>
<keyword id="KW-0961">Cell wall biogenesis/degradation</keyword>
<keyword id="KW-0963">Cytoplasm</keyword>
<keyword id="KW-0460">Magnesium</keyword>
<keyword id="KW-0479">Metal-binding</keyword>
<keyword id="KW-0511">Multifunctional enzyme</keyword>
<keyword id="KW-0548">Nucleotidyltransferase</keyword>
<keyword id="KW-0573">Peptidoglycan synthesis</keyword>
<keyword id="KW-0677">Repeat</keyword>
<keyword id="KW-0808">Transferase</keyword>